<proteinExistence type="evidence at transcript level"/>
<comment type="similarity">
    <text evidence="1">Belongs to the PPR family. P subfamily.</text>
</comment>
<comment type="sequence caution" evidence="1">
    <conflict type="erroneous gene model prediction">
        <sequence resource="EMBL-CDS" id="AAC67316"/>
    </conflict>
</comment>
<comment type="sequence caution" evidence="1">
    <conflict type="erroneous gene model prediction">
        <sequence resource="EMBL-CDS" id="AAD14538"/>
    </conflict>
    <text>Was originally thought to correspond to two different genes At2g01380 and At2g01390.</text>
</comment>
<comment type="sequence caution" evidence="1">
    <conflict type="erroneous gene model prediction">
        <sequence resource="EMBL-CDS" id="AAM15140"/>
    </conflict>
    <text>Was originally thought to correspond to two different genes At2g01380 and At2g01390.</text>
</comment>
<comment type="online information" name="Pentatricopeptide repeat proteins">
    <link uri="https://ppr.plantenergy.uwa.edu.au"/>
</comment>
<keyword id="KW-1185">Reference proteome</keyword>
<keyword id="KW-0677">Repeat</keyword>
<reference key="1">
    <citation type="journal article" date="1999" name="Nature">
        <title>Sequence and analysis of chromosome 2 of the plant Arabidopsis thaliana.</title>
        <authorList>
            <person name="Lin X."/>
            <person name="Kaul S."/>
            <person name="Rounsley S.D."/>
            <person name="Shea T.P."/>
            <person name="Benito M.-I."/>
            <person name="Town C.D."/>
            <person name="Fujii C.Y."/>
            <person name="Mason T.M."/>
            <person name="Bowman C.L."/>
            <person name="Barnstead M.E."/>
            <person name="Feldblyum T.V."/>
            <person name="Buell C.R."/>
            <person name="Ketchum K.A."/>
            <person name="Lee J.J."/>
            <person name="Ronning C.M."/>
            <person name="Koo H.L."/>
            <person name="Moffat K.S."/>
            <person name="Cronin L.A."/>
            <person name="Shen M."/>
            <person name="Pai G."/>
            <person name="Van Aken S."/>
            <person name="Umayam L."/>
            <person name="Tallon L.J."/>
            <person name="Gill J.E."/>
            <person name="Adams M.D."/>
            <person name="Carrera A.J."/>
            <person name="Creasy T.H."/>
            <person name="Goodman H.M."/>
            <person name="Somerville C.R."/>
            <person name="Copenhaver G.P."/>
            <person name="Preuss D."/>
            <person name="Nierman W.C."/>
            <person name="White O."/>
            <person name="Eisen J.A."/>
            <person name="Salzberg S.L."/>
            <person name="Fraser C.M."/>
            <person name="Venter J.C."/>
        </authorList>
    </citation>
    <scope>NUCLEOTIDE SEQUENCE [LARGE SCALE GENOMIC DNA]</scope>
    <source>
        <strain>cv. Columbia</strain>
    </source>
</reference>
<reference key="2">
    <citation type="journal article" date="2017" name="Plant J.">
        <title>Araport11: a complete reannotation of the Arabidopsis thaliana reference genome.</title>
        <authorList>
            <person name="Cheng C.Y."/>
            <person name="Krishnakumar V."/>
            <person name="Chan A.P."/>
            <person name="Thibaud-Nissen F."/>
            <person name="Schobel S."/>
            <person name="Town C.D."/>
        </authorList>
    </citation>
    <scope>GENOME REANNOTATION</scope>
    <source>
        <strain>cv. Columbia</strain>
    </source>
</reference>
<reference key="3">
    <citation type="submission" date="2004-09" db="EMBL/GenBank/DDBJ databases">
        <authorList>
            <consortium name="Center for eukaryotic structural genomics (CESG)"/>
        </authorList>
    </citation>
    <scope>NUCLEOTIDE SEQUENCE [LARGE SCALE MRNA] OF 361-577</scope>
    <source>
        <strain>cv. Columbia</strain>
    </source>
</reference>
<reference key="4">
    <citation type="journal article" date="2004" name="Plant Cell">
        <title>Genome-wide analysis of Arabidopsis pentatricopeptide repeat proteins reveals their essential role in organelle biogenesis.</title>
        <authorList>
            <person name="Lurin C."/>
            <person name="Andres C."/>
            <person name="Aubourg S."/>
            <person name="Bellaoui M."/>
            <person name="Bitton F."/>
            <person name="Bruyere C."/>
            <person name="Caboche M."/>
            <person name="Debast C."/>
            <person name="Gualberto J."/>
            <person name="Hoffmann B."/>
            <person name="Lecharny A."/>
            <person name="Le Ret M."/>
            <person name="Martin-Magniette M.-L."/>
            <person name="Mireau H."/>
            <person name="Peeters N."/>
            <person name="Renou J.-P."/>
            <person name="Szurek B."/>
            <person name="Taconnat L."/>
            <person name="Small I."/>
        </authorList>
    </citation>
    <scope>GENE FAMILY</scope>
</reference>
<sequence length="577" mass="65603">MRFSSIFRNTPIQFSNRRSSVKLLHSLPRLKPTNSKRFSQKPKLVKTQTLPDPSVYTRDIVSNIYNILKYSNWDSAQEQLPHLGVRWDSHIINRVLKAHPPMQKAWLFFNWAAQIKGFKHDHFTYTTMLDIFGEAGRIQSMYSVFHLMKEKGVLIDTVTYTSLIHWVSSSGDVDGAMRLWEEMRDNGCEPTVVSYTAYMKMLFADGRVEEATEVYKEMLRSRVSPNCHTYTVLMEYLVATGKCEEALDIFFKMQEIGVQPDKAACNILIAKALKFGETSFMTRVLVYMKENGVVLRYPIFVEALETLKAAGESDDLLREVNSHISVESLCSSDIDETPTAEVNDTKNSDDSRVISSVLLMKQNLVAVDILLNQMRDRNIKLDSFVVSAIIETNCDRCRTEGASLAFDYSLEMGIHLKKSAYLALIGNFLRSNELPKVIEVVKEMVKAQHSLGCYQGAMLIHRLGFGRRPRLAADVFDLLPDDQKGVAAYTALMDVYISAGSPEKAMKILREMREREIMPSLGTYDVLLSGLEKTSDFQKEVALLRKEKKSLVASARFRENVHVEDKICDLLFATNLL</sequence>
<accession>Q9ZU29</accession>
<accession>Q9ZNT2</accession>
<evidence type="ECO:0000305" key="1"/>
<organism>
    <name type="scientific">Arabidopsis thaliana</name>
    <name type="common">Mouse-ear cress</name>
    <dbReference type="NCBI Taxonomy" id="3702"/>
    <lineage>
        <taxon>Eukaryota</taxon>
        <taxon>Viridiplantae</taxon>
        <taxon>Streptophyta</taxon>
        <taxon>Embryophyta</taxon>
        <taxon>Tracheophyta</taxon>
        <taxon>Spermatophyta</taxon>
        <taxon>Magnoliopsida</taxon>
        <taxon>eudicotyledons</taxon>
        <taxon>Gunneridae</taxon>
        <taxon>Pentapetalae</taxon>
        <taxon>rosids</taxon>
        <taxon>malvids</taxon>
        <taxon>Brassicales</taxon>
        <taxon>Brassicaceae</taxon>
        <taxon>Camelineae</taxon>
        <taxon>Arabidopsis</taxon>
    </lineage>
</organism>
<feature type="chain" id="PRO_0000355999" description="Pentatricopeptide repeat-containing protein At2g01390">
    <location>
        <begin position="1"/>
        <end position="577"/>
    </location>
</feature>
<feature type="repeat" description="PPR 1">
    <location>
        <begin position="121"/>
        <end position="155"/>
    </location>
</feature>
<feature type="repeat" description="PPR 2">
    <location>
        <begin position="156"/>
        <end position="190"/>
    </location>
</feature>
<feature type="repeat" description="PPR 3">
    <location>
        <begin position="191"/>
        <end position="225"/>
    </location>
</feature>
<feature type="repeat" description="PPR 4">
    <location>
        <begin position="226"/>
        <end position="260"/>
    </location>
</feature>
<feature type="repeat" description="PPR 5">
    <location>
        <begin position="261"/>
        <end position="295"/>
    </location>
</feature>
<feature type="repeat" description="PPR 6">
    <location>
        <begin position="382"/>
        <end position="416"/>
    </location>
</feature>
<feature type="repeat" description="PPR 7">
    <location>
        <begin position="417"/>
        <end position="451"/>
    </location>
</feature>
<feature type="repeat" description="PPR 8">
    <location>
        <begin position="452"/>
        <end position="482"/>
    </location>
</feature>
<feature type="repeat" description="PPR 9">
    <location>
        <begin position="485"/>
        <end position="519"/>
    </location>
</feature>
<feature type="repeat" description="PPR 10">
    <location>
        <begin position="520"/>
        <end position="554"/>
    </location>
</feature>
<feature type="sequence conflict" description="In Ref. 3; BT012081." evidence="1" ref="3">
    <original>A</original>
    <variation>V</variation>
    <location>
        <position position="487"/>
    </location>
</feature>
<protein>
    <recommendedName>
        <fullName>Pentatricopeptide repeat-containing protein At2g01390</fullName>
    </recommendedName>
</protein>
<name>PP139_ARATH</name>
<dbReference type="EMBL" id="AC005560">
    <property type="protein sequence ID" value="AAC67316.1"/>
    <property type="status" value="ALT_SEQ"/>
    <property type="molecule type" value="Genomic_DNA"/>
</dbReference>
<dbReference type="EMBL" id="AC006200">
    <property type="protein sequence ID" value="AAD14538.1"/>
    <property type="status" value="ALT_SEQ"/>
    <property type="molecule type" value="Genomic_DNA"/>
</dbReference>
<dbReference type="EMBL" id="AC006200">
    <property type="protein sequence ID" value="AAM15140.1"/>
    <property type="status" value="ALT_SEQ"/>
    <property type="molecule type" value="Genomic_DNA"/>
</dbReference>
<dbReference type="EMBL" id="CP002685">
    <property type="protein sequence ID" value="AEC05445.1"/>
    <property type="molecule type" value="Genomic_DNA"/>
</dbReference>
<dbReference type="EMBL" id="BT012081">
    <property type="status" value="NOT_ANNOTATED_CDS"/>
    <property type="molecule type" value="mRNA"/>
</dbReference>
<dbReference type="PIR" id="A84424">
    <property type="entry name" value="A84424"/>
</dbReference>
<dbReference type="PIR" id="B84424">
    <property type="entry name" value="B84424"/>
</dbReference>
<dbReference type="RefSeq" id="NP_178248.2">
    <property type="nucleotide sequence ID" value="NM_126200.3"/>
</dbReference>
<dbReference type="SMR" id="Q9ZU29"/>
<dbReference type="FunCoup" id="Q9ZU29">
    <property type="interactions" value="1073"/>
</dbReference>
<dbReference type="STRING" id="3702.Q9ZU29"/>
<dbReference type="PaxDb" id="3702-AT2G01390.1"/>
<dbReference type="ProteomicsDB" id="250489"/>
<dbReference type="DNASU" id="814667"/>
<dbReference type="EnsemblPlants" id="AT2G01390.1">
    <property type="protein sequence ID" value="AT2G01390.1"/>
    <property type="gene ID" value="AT2G01390"/>
</dbReference>
<dbReference type="GeneID" id="814667"/>
<dbReference type="Gramene" id="AT2G01390.1">
    <property type="protein sequence ID" value="AT2G01390.1"/>
    <property type="gene ID" value="AT2G01390"/>
</dbReference>
<dbReference type="KEGG" id="ath:AT2G01390"/>
<dbReference type="Araport" id="AT2G01390"/>
<dbReference type="TAIR" id="AT2G01390">
    <property type="gene designation" value="EMB3111"/>
</dbReference>
<dbReference type="eggNOG" id="KOG4197">
    <property type="taxonomic scope" value="Eukaryota"/>
</dbReference>
<dbReference type="HOGENOM" id="CLU_036546_0_0_1"/>
<dbReference type="InParanoid" id="Q9ZU29"/>
<dbReference type="OMA" id="HKCTATY"/>
<dbReference type="PhylomeDB" id="Q9ZU29"/>
<dbReference type="PRO" id="PR:Q9ZU29"/>
<dbReference type="Proteomes" id="UP000006548">
    <property type="component" value="Chromosome 2"/>
</dbReference>
<dbReference type="ExpressionAtlas" id="Q9ZU29">
    <property type="expression patterns" value="baseline and differential"/>
</dbReference>
<dbReference type="GO" id="GO:0003729">
    <property type="term" value="F:mRNA binding"/>
    <property type="evidence" value="ECO:0000318"/>
    <property type="project" value="GO_Central"/>
</dbReference>
<dbReference type="Gene3D" id="1.25.40.10">
    <property type="entry name" value="Tetratricopeptide repeat domain"/>
    <property type="match status" value="3"/>
</dbReference>
<dbReference type="InterPro" id="IPR002885">
    <property type="entry name" value="Pentatricopeptide_rpt"/>
</dbReference>
<dbReference type="InterPro" id="IPR011990">
    <property type="entry name" value="TPR-like_helical_dom_sf"/>
</dbReference>
<dbReference type="NCBIfam" id="TIGR00756">
    <property type="entry name" value="PPR"/>
    <property type="match status" value="5"/>
</dbReference>
<dbReference type="PANTHER" id="PTHR47447">
    <property type="entry name" value="OS03G0856100 PROTEIN"/>
    <property type="match status" value="1"/>
</dbReference>
<dbReference type="PANTHER" id="PTHR47447:SF27">
    <property type="entry name" value="PENTACOTRIPEPTIDE-REPEAT REGION OF PRORP DOMAIN-CONTAINING PROTEIN"/>
    <property type="match status" value="1"/>
</dbReference>
<dbReference type="Pfam" id="PF01535">
    <property type="entry name" value="PPR"/>
    <property type="match status" value="2"/>
</dbReference>
<dbReference type="Pfam" id="PF13041">
    <property type="entry name" value="PPR_2"/>
    <property type="match status" value="2"/>
</dbReference>
<dbReference type="Pfam" id="PF13812">
    <property type="entry name" value="PPR_3"/>
    <property type="match status" value="1"/>
</dbReference>
<dbReference type="PROSITE" id="PS51375">
    <property type="entry name" value="PPR"/>
    <property type="match status" value="9"/>
</dbReference>
<gene>
    <name type="ordered locus">At2g01390/At2g01380</name>
    <name type="ORF">F10A8.29</name>
    <name type="ORF">F2I9.1</name>
</gene>